<keyword id="KW-0030">Aminoacyl-tRNA synthetase</keyword>
<keyword id="KW-0067">ATP-binding</keyword>
<keyword id="KW-0963">Cytoplasm</keyword>
<keyword id="KW-0436">Ligase</keyword>
<keyword id="KW-0479">Metal-binding</keyword>
<keyword id="KW-0547">Nucleotide-binding</keyword>
<keyword id="KW-0648">Protein biosynthesis</keyword>
<keyword id="KW-0694">RNA-binding</keyword>
<keyword id="KW-0820">tRNA-binding</keyword>
<keyword id="KW-0862">Zinc</keyword>
<evidence type="ECO:0000255" key="1">
    <source>
        <dbReference type="HAMAP-Rule" id="MF_00036"/>
    </source>
</evidence>
<protein>
    <recommendedName>
        <fullName evidence="1">Alanine--tRNA ligase</fullName>
        <ecNumber evidence="1">6.1.1.7</ecNumber>
    </recommendedName>
    <alternativeName>
        <fullName evidence="1">Alanyl-tRNA synthetase</fullName>
        <shortName evidence="1">AlaRS</shortName>
    </alternativeName>
</protein>
<proteinExistence type="inferred from homology"/>
<dbReference type="EC" id="6.1.1.7" evidence="1"/>
<dbReference type="EMBL" id="CP000518">
    <property type="protein sequence ID" value="ABL91591.1"/>
    <property type="molecule type" value="Genomic_DNA"/>
</dbReference>
<dbReference type="SMR" id="A1UFI3"/>
<dbReference type="STRING" id="189918.Mkms_2393"/>
<dbReference type="KEGG" id="mkm:Mkms_2393"/>
<dbReference type="HOGENOM" id="CLU_004485_1_1_11"/>
<dbReference type="OrthoDB" id="9803884at2"/>
<dbReference type="GO" id="GO:0005829">
    <property type="term" value="C:cytosol"/>
    <property type="evidence" value="ECO:0007669"/>
    <property type="project" value="TreeGrafter"/>
</dbReference>
<dbReference type="GO" id="GO:0004813">
    <property type="term" value="F:alanine-tRNA ligase activity"/>
    <property type="evidence" value="ECO:0007669"/>
    <property type="project" value="UniProtKB-UniRule"/>
</dbReference>
<dbReference type="GO" id="GO:0002161">
    <property type="term" value="F:aminoacyl-tRNA deacylase activity"/>
    <property type="evidence" value="ECO:0007669"/>
    <property type="project" value="TreeGrafter"/>
</dbReference>
<dbReference type="GO" id="GO:0005524">
    <property type="term" value="F:ATP binding"/>
    <property type="evidence" value="ECO:0007669"/>
    <property type="project" value="UniProtKB-UniRule"/>
</dbReference>
<dbReference type="GO" id="GO:0000049">
    <property type="term" value="F:tRNA binding"/>
    <property type="evidence" value="ECO:0007669"/>
    <property type="project" value="UniProtKB-KW"/>
</dbReference>
<dbReference type="GO" id="GO:0008270">
    <property type="term" value="F:zinc ion binding"/>
    <property type="evidence" value="ECO:0007669"/>
    <property type="project" value="UniProtKB-UniRule"/>
</dbReference>
<dbReference type="GO" id="GO:0006419">
    <property type="term" value="P:alanyl-tRNA aminoacylation"/>
    <property type="evidence" value="ECO:0007669"/>
    <property type="project" value="UniProtKB-UniRule"/>
</dbReference>
<dbReference type="CDD" id="cd00673">
    <property type="entry name" value="AlaRS_core"/>
    <property type="match status" value="1"/>
</dbReference>
<dbReference type="FunFam" id="3.10.310.40:FF:000001">
    <property type="entry name" value="Alanine--tRNA ligase"/>
    <property type="match status" value="1"/>
</dbReference>
<dbReference type="FunFam" id="3.30.54.20:FF:000001">
    <property type="entry name" value="Alanine--tRNA ligase"/>
    <property type="match status" value="1"/>
</dbReference>
<dbReference type="FunFam" id="3.30.930.10:FF:000004">
    <property type="entry name" value="Alanine--tRNA ligase"/>
    <property type="match status" value="1"/>
</dbReference>
<dbReference type="FunFam" id="3.30.980.10:FF:000004">
    <property type="entry name" value="Alanine--tRNA ligase, cytoplasmic"/>
    <property type="match status" value="1"/>
</dbReference>
<dbReference type="Gene3D" id="2.40.30.130">
    <property type="match status" value="1"/>
</dbReference>
<dbReference type="Gene3D" id="3.10.310.40">
    <property type="match status" value="1"/>
</dbReference>
<dbReference type="Gene3D" id="3.30.54.20">
    <property type="match status" value="1"/>
</dbReference>
<dbReference type="Gene3D" id="6.10.250.550">
    <property type="match status" value="1"/>
</dbReference>
<dbReference type="Gene3D" id="3.30.930.10">
    <property type="entry name" value="Bira Bifunctional Protein, Domain 2"/>
    <property type="match status" value="1"/>
</dbReference>
<dbReference type="Gene3D" id="3.30.980.10">
    <property type="entry name" value="Threonyl-trna Synthetase, Chain A, domain 2"/>
    <property type="match status" value="1"/>
</dbReference>
<dbReference type="HAMAP" id="MF_00036_B">
    <property type="entry name" value="Ala_tRNA_synth_B"/>
    <property type="match status" value="1"/>
</dbReference>
<dbReference type="InterPro" id="IPR045864">
    <property type="entry name" value="aa-tRNA-synth_II/BPL/LPL"/>
</dbReference>
<dbReference type="InterPro" id="IPR002318">
    <property type="entry name" value="Ala-tRNA-lgiase_IIc"/>
</dbReference>
<dbReference type="InterPro" id="IPR018162">
    <property type="entry name" value="Ala-tRNA-ligase_IIc_anticod-bd"/>
</dbReference>
<dbReference type="InterPro" id="IPR018165">
    <property type="entry name" value="Ala-tRNA-synth_IIc_core"/>
</dbReference>
<dbReference type="InterPro" id="IPR018164">
    <property type="entry name" value="Ala-tRNA-synth_IIc_N"/>
</dbReference>
<dbReference type="InterPro" id="IPR050058">
    <property type="entry name" value="Ala-tRNA_ligase"/>
</dbReference>
<dbReference type="InterPro" id="IPR023033">
    <property type="entry name" value="Ala_tRNA_ligase_euk/bac"/>
</dbReference>
<dbReference type="InterPro" id="IPR003156">
    <property type="entry name" value="DHHA1_dom"/>
</dbReference>
<dbReference type="InterPro" id="IPR018163">
    <property type="entry name" value="Thr/Ala-tRNA-synth_IIc_edit"/>
</dbReference>
<dbReference type="InterPro" id="IPR009000">
    <property type="entry name" value="Transl_B-barrel_sf"/>
</dbReference>
<dbReference type="InterPro" id="IPR012947">
    <property type="entry name" value="tRNA_SAD"/>
</dbReference>
<dbReference type="NCBIfam" id="TIGR00344">
    <property type="entry name" value="alaS"/>
    <property type="match status" value="1"/>
</dbReference>
<dbReference type="PANTHER" id="PTHR11777:SF9">
    <property type="entry name" value="ALANINE--TRNA LIGASE, CYTOPLASMIC"/>
    <property type="match status" value="1"/>
</dbReference>
<dbReference type="PANTHER" id="PTHR11777">
    <property type="entry name" value="ALANYL-TRNA SYNTHETASE"/>
    <property type="match status" value="1"/>
</dbReference>
<dbReference type="Pfam" id="PF02272">
    <property type="entry name" value="DHHA1"/>
    <property type="match status" value="1"/>
</dbReference>
<dbReference type="Pfam" id="PF01411">
    <property type="entry name" value="tRNA-synt_2c"/>
    <property type="match status" value="1"/>
</dbReference>
<dbReference type="Pfam" id="PF07973">
    <property type="entry name" value="tRNA_SAD"/>
    <property type="match status" value="1"/>
</dbReference>
<dbReference type="PRINTS" id="PR00980">
    <property type="entry name" value="TRNASYNTHALA"/>
</dbReference>
<dbReference type="SMART" id="SM00863">
    <property type="entry name" value="tRNA_SAD"/>
    <property type="match status" value="1"/>
</dbReference>
<dbReference type="SUPFAM" id="SSF55681">
    <property type="entry name" value="Class II aaRS and biotin synthetases"/>
    <property type="match status" value="1"/>
</dbReference>
<dbReference type="SUPFAM" id="SSF101353">
    <property type="entry name" value="Putative anticodon-binding domain of alanyl-tRNA synthetase (AlaRS)"/>
    <property type="match status" value="1"/>
</dbReference>
<dbReference type="SUPFAM" id="SSF55186">
    <property type="entry name" value="ThrRS/AlaRS common domain"/>
    <property type="match status" value="1"/>
</dbReference>
<dbReference type="SUPFAM" id="SSF50447">
    <property type="entry name" value="Translation proteins"/>
    <property type="match status" value="1"/>
</dbReference>
<dbReference type="PROSITE" id="PS50860">
    <property type="entry name" value="AA_TRNA_LIGASE_II_ALA"/>
    <property type="match status" value="1"/>
</dbReference>
<reference key="1">
    <citation type="submission" date="2006-12" db="EMBL/GenBank/DDBJ databases">
        <title>Complete sequence of chromosome of Mycobacterium sp. KMS.</title>
        <authorList>
            <consortium name="US DOE Joint Genome Institute"/>
            <person name="Copeland A."/>
            <person name="Lucas S."/>
            <person name="Lapidus A."/>
            <person name="Barry K."/>
            <person name="Detter J.C."/>
            <person name="Glavina del Rio T."/>
            <person name="Hammon N."/>
            <person name="Israni S."/>
            <person name="Dalin E."/>
            <person name="Tice H."/>
            <person name="Pitluck S."/>
            <person name="Kiss H."/>
            <person name="Brettin T."/>
            <person name="Bruce D."/>
            <person name="Han C."/>
            <person name="Tapia R."/>
            <person name="Gilna P."/>
            <person name="Schmutz J."/>
            <person name="Larimer F."/>
            <person name="Land M."/>
            <person name="Hauser L."/>
            <person name="Kyrpides N."/>
            <person name="Mikhailova N."/>
            <person name="Miller C.D."/>
            <person name="Richardson P."/>
        </authorList>
    </citation>
    <scope>NUCLEOTIDE SEQUENCE [LARGE SCALE GENOMIC DNA]</scope>
    <source>
        <strain>KMS</strain>
    </source>
</reference>
<accession>A1UFI3</accession>
<feature type="chain" id="PRO_0000347685" description="Alanine--tRNA ligase">
    <location>
        <begin position="1"/>
        <end position="897"/>
    </location>
</feature>
<feature type="binding site" evidence="1">
    <location>
        <position position="581"/>
    </location>
    <ligand>
        <name>Zn(2+)</name>
        <dbReference type="ChEBI" id="CHEBI:29105"/>
    </ligand>
</feature>
<feature type="binding site" evidence="1">
    <location>
        <position position="585"/>
    </location>
    <ligand>
        <name>Zn(2+)</name>
        <dbReference type="ChEBI" id="CHEBI:29105"/>
    </ligand>
</feature>
<feature type="binding site" evidence="1">
    <location>
        <position position="684"/>
    </location>
    <ligand>
        <name>Zn(2+)</name>
        <dbReference type="ChEBI" id="CHEBI:29105"/>
    </ligand>
</feature>
<feature type="binding site" evidence="1">
    <location>
        <position position="688"/>
    </location>
    <ligand>
        <name>Zn(2+)</name>
        <dbReference type="ChEBI" id="CHEBI:29105"/>
    </ligand>
</feature>
<comment type="function">
    <text evidence="1">Catalyzes the attachment of alanine to tRNA(Ala) in a two-step reaction: alanine is first activated by ATP to form Ala-AMP and then transferred to the acceptor end of tRNA(Ala). Also edits incorrectly charged Ser-tRNA(Ala) and Gly-tRNA(Ala) via its editing domain.</text>
</comment>
<comment type="catalytic activity">
    <reaction evidence="1">
        <text>tRNA(Ala) + L-alanine + ATP = L-alanyl-tRNA(Ala) + AMP + diphosphate</text>
        <dbReference type="Rhea" id="RHEA:12540"/>
        <dbReference type="Rhea" id="RHEA-COMP:9657"/>
        <dbReference type="Rhea" id="RHEA-COMP:9923"/>
        <dbReference type="ChEBI" id="CHEBI:30616"/>
        <dbReference type="ChEBI" id="CHEBI:33019"/>
        <dbReference type="ChEBI" id="CHEBI:57972"/>
        <dbReference type="ChEBI" id="CHEBI:78442"/>
        <dbReference type="ChEBI" id="CHEBI:78497"/>
        <dbReference type="ChEBI" id="CHEBI:456215"/>
        <dbReference type="EC" id="6.1.1.7"/>
    </reaction>
</comment>
<comment type="cofactor">
    <cofactor evidence="1">
        <name>Zn(2+)</name>
        <dbReference type="ChEBI" id="CHEBI:29105"/>
    </cofactor>
    <text evidence="1">Binds 1 zinc ion per subunit.</text>
</comment>
<comment type="subcellular location">
    <subcellularLocation>
        <location evidence="1">Cytoplasm</location>
    </subcellularLocation>
</comment>
<comment type="domain">
    <text evidence="1">Consists of three domains; the N-terminal catalytic domain, the editing domain and the C-terminal C-Ala domain. The editing domain removes incorrectly charged amino acids, while the C-Ala domain, along with tRNA(Ala), serves as a bridge to cooperatively bring together the editing and aminoacylation centers thus stimulating deacylation of misacylated tRNAs.</text>
</comment>
<comment type="similarity">
    <text evidence="1">Belongs to the class-II aminoacyl-tRNA synthetase family.</text>
</comment>
<gene>
    <name evidence="1" type="primary">alaS</name>
    <name type="ordered locus">Mkms_2393</name>
</gene>
<name>SYA_MYCSK</name>
<sequence length="897" mass="96939">MQTHEIRKRFLDHFVKAGHTEVPSASVILDDPNLLFVNAGMVQFVPFFLGQRTPPYQRATSIQKCIRTPDIDEVGITTRHNTFFQMAGNFSFGDYFKKGAIEFAWTLLTNPVDQGGYGFDPEKLWATVYLDDDEAIQLWQEVAGLPLERIQRRGMADNYWSMGIPGPCGPSSEIYVDRGPEYGIEGGPEANEDRYIEIWNLVFMQNERGEGTGKSDFEILGPLPRKNIDTGMGIERVACLLQGVDNVYETDLLRPVIDAVAARAPRGYGRGSHSDDVRYRIIADHSRTAAILIGDGVSPGNDGRGYVLRRLLRRVIRSAKLLGIDDAVVGDLMATVRDAMGPSYPELVTDFDRIQRIAVAEETAFNRTLSSGSRLFEEAAQSTKAAGADRLSGRDAFTLHDTYGFPIELTLEMAAEADLAVDEEGFRSLMAEQRQRAKADAAARKQAHTDLTAYRELVDAHPTQFTGFDELTTEARILGIFVDGRRVPVVGHDTATAQHRIELVLDRSPFYAESGGQIADEGTITGTGASQTAKAAVSDVQKIAKTLWVHRVTVESGEFVEGDTVTAAVDPRWRHGATQGHSGTHMVHAALRQVLGPNAVQAGSLNRPGYLRFDFNWQGALTDDQRTQIEEVTNEAVEADFEVHSFTTELEKAKSMGAMALFGEAYPDEVRVVEIGGPFSLELCGGTHVRSSAQIGPVTILGESSVGSGVRRVEAYVGLDSFRHLAKERALMAGLASSLKVPSEEVPARVAGLVERLKAAEKELDRMRLANARAAAVNAVAGAERVGKVRLVAQRMAGGMSAGDLRTLVGDIRGKLGGDPAVVALIAEGDNDTVPFVVAVNPAAQDLGLRANELVKQFGAAVNGRGGGKADLAQGSGKGAAGIDAALAALRAEIDRS</sequence>
<organism>
    <name type="scientific">Mycobacterium sp. (strain KMS)</name>
    <dbReference type="NCBI Taxonomy" id="189918"/>
    <lineage>
        <taxon>Bacteria</taxon>
        <taxon>Bacillati</taxon>
        <taxon>Actinomycetota</taxon>
        <taxon>Actinomycetes</taxon>
        <taxon>Mycobacteriales</taxon>
        <taxon>Mycobacteriaceae</taxon>
        <taxon>Mycobacterium</taxon>
    </lineage>
</organism>